<proteinExistence type="inferred from homology"/>
<sequence>MQVQFSKMHGLGNDFVVIDNVTQNVFFSKEKISQLADRNFGIGFDQLLVVEPPYDPEQDFHYRIFNSDGSEVSQCGNGARCFARFVKMKGLTNRNKIVVSTKAGRIVLYHERDGQITVNMGEPIFEPAKIPLKANKQENIYIIRENDHTFFCGAVSMGNPHCVLLVDDVETADVEGIGKTLVAHERFPEGANIGFMQILNSGHIKLRVYERGVGETLACGSGACAAVAVGQMQKKLNKEVTVDLPGGTLKIRWQGPGSILKMTGTAEHVFDGNITL</sequence>
<organism>
    <name type="scientific">Pseudoalteromonas atlantica (strain T6c / ATCC BAA-1087)</name>
    <dbReference type="NCBI Taxonomy" id="3042615"/>
    <lineage>
        <taxon>Bacteria</taxon>
        <taxon>Pseudomonadati</taxon>
        <taxon>Pseudomonadota</taxon>
        <taxon>Gammaproteobacteria</taxon>
        <taxon>Alteromonadales</taxon>
        <taxon>Alteromonadaceae</taxon>
        <taxon>Paraglaciecola</taxon>
    </lineage>
</organism>
<dbReference type="EC" id="5.1.1.7" evidence="1"/>
<dbReference type="EMBL" id="CP000388">
    <property type="protein sequence ID" value="ABG42573.1"/>
    <property type="molecule type" value="Genomic_DNA"/>
</dbReference>
<dbReference type="RefSeq" id="WP_006991618.1">
    <property type="nucleotide sequence ID" value="NC_008228.1"/>
</dbReference>
<dbReference type="SMR" id="Q15NG5"/>
<dbReference type="STRING" id="342610.Patl_4074"/>
<dbReference type="KEGG" id="pat:Patl_4074"/>
<dbReference type="eggNOG" id="COG0253">
    <property type="taxonomic scope" value="Bacteria"/>
</dbReference>
<dbReference type="HOGENOM" id="CLU_053306_1_1_6"/>
<dbReference type="OrthoDB" id="9805408at2"/>
<dbReference type="UniPathway" id="UPA00034">
    <property type="reaction ID" value="UER00025"/>
</dbReference>
<dbReference type="Proteomes" id="UP000001981">
    <property type="component" value="Chromosome"/>
</dbReference>
<dbReference type="GO" id="GO:0005829">
    <property type="term" value="C:cytosol"/>
    <property type="evidence" value="ECO:0007669"/>
    <property type="project" value="TreeGrafter"/>
</dbReference>
<dbReference type="GO" id="GO:0008837">
    <property type="term" value="F:diaminopimelate epimerase activity"/>
    <property type="evidence" value="ECO:0007669"/>
    <property type="project" value="UniProtKB-UniRule"/>
</dbReference>
<dbReference type="GO" id="GO:0009089">
    <property type="term" value="P:lysine biosynthetic process via diaminopimelate"/>
    <property type="evidence" value="ECO:0007669"/>
    <property type="project" value="UniProtKB-UniRule"/>
</dbReference>
<dbReference type="FunFam" id="3.10.310.10:FF:000001">
    <property type="entry name" value="Diaminopimelate epimerase"/>
    <property type="match status" value="1"/>
</dbReference>
<dbReference type="FunFam" id="3.10.310.10:FF:000002">
    <property type="entry name" value="Diaminopimelate epimerase"/>
    <property type="match status" value="1"/>
</dbReference>
<dbReference type="Gene3D" id="3.10.310.10">
    <property type="entry name" value="Diaminopimelate Epimerase, Chain A, domain 1"/>
    <property type="match status" value="2"/>
</dbReference>
<dbReference type="HAMAP" id="MF_00197">
    <property type="entry name" value="DAP_epimerase"/>
    <property type="match status" value="1"/>
</dbReference>
<dbReference type="InterPro" id="IPR018510">
    <property type="entry name" value="DAP_epimerase_AS"/>
</dbReference>
<dbReference type="InterPro" id="IPR001653">
    <property type="entry name" value="DAP_epimerase_DapF"/>
</dbReference>
<dbReference type="NCBIfam" id="TIGR00652">
    <property type="entry name" value="DapF"/>
    <property type="match status" value="1"/>
</dbReference>
<dbReference type="PANTHER" id="PTHR31689:SF0">
    <property type="entry name" value="DIAMINOPIMELATE EPIMERASE"/>
    <property type="match status" value="1"/>
</dbReference>
<dbReference type="PANTHER" id="PTHR31689">
    <property type="entry name" value="DIAMINOPIMELATE EPIMERASE, CHLOROPLASTIC"/>
    <property type="match status" value="1"/>
</dbReference>
<dbReference type="Pfam" id="PF01678">
    <property type="entry name" value="DAP_epimerase"/>
    <property type="match status" value="2"/>
</dbReference>
<dbReference type="SUPFAM" id="SSF54506">
    <property type="entry name" value="Diaminopimelate epimerase-like"/>
    <property type="match status" value="1"/>
</dbReference>
<dbReference type="PROSITE" id="PS01326">
    <property type="entry name" value="DAP_EPIMERASE"/>
    <property type="match status" value="1"/>
</dbReference>
<name>DAPF_PSEA6</name>
<keyword id="KW-0028">Amino-acid biosynthesis</keyword>
<keyword id="KW-0963">Cytoplasm</keyword>
<keyword id="KW-0413">Isomerase</keyword>
<keyword id="KW-0457">Lysine biosynthesis</keyword>
<reference key="1">
    <citation type="submission" date="2006-06" db="EMBL/GenBank/DDBJ databases">
        <title>Complete sequence of Pseudoalteromonas atlantica T6c.</title>
        <authorList>
            <consortium name="US DOE Joint Genome Institute"/>
            <person name="Copeland A."/>
            <person name="Lucas S."/>
            <person name="Lapidus A."/>
            <person name="Barry K."/>
            <person name="Detter J.C."/>
            <person name="Glavina del Rio T."/>
            <person name="Hammon N."/>
            <person name="Israni S."/>
            <person name="Dalin E."/>
            <person name="Tice H."/>
            <person name="Pitluck S."/>
            <person name="Saunders E."/>
            <person name="Brettin T."/>
            <person name="Bruce D."/>
            <person name="Han C."/>
            <person name="Tapia R."/>
            <person name="Gilna P."/>
            <person name="Schmutz J."/>
            <person name="Larimer F."/>
            <person name="Land M."/>
            <person name="Hauser L."/>
            <person name="Kyrpides N."/>
            <person name="Kim E."/>
            <person name="Karls A.C."/>
            <person name="Bartlett D."/>
            <person name="Higgins B.P."/>
            <person name="Richardson P."/>
        </authorList>
    </citation>
    <scope>NUCLEOTIDE SEQUENCE [LARGE SCALE GENOMIC DNA]</scope>
    <source>
        <strain>T6c / ATCC BAA-1087</strain>
    </source>
</reference>
<protein>
    <recommendedName>
        <fullName evidence="1">Diaminopimelate epimerase</fullName>
        <shortName evidence="1">DAP epimerase</shortName>
        <ecNumber evidence="1">5.1.1.7</ecNumber>
    </recommendedName>
    <alternativeName>
        <fullName evidence="1">PLP-independent amino acid racemase</fullName>
    </alternativeName>
</protein>
<comment type="function">
    <text evidence="1">Catalyzes the stereoinversion of LL-2,6-diaminopimelate (L,L-DAP) to meso-diaminopimelate (meso-DAP), a precursor of L-lysine and an essential component of the bacterial peptidoglycan.</text>
</comment>
<comment type="catalytic activity">
    <reaction evidence="1">
        <text>(2S,6S)-2,6-diaminopimelate = meso-2,6-diaminopimelate</text>
        <dbReference type="Rhea" id="RHEA:15393"/>
        <dbReference type="ChEBI" id="CHEBI:57609"/>
        <dbReference type="ChEBI" id="CHEBI:57791"/>
        <dbReference type="EC" id="5.1.1.7"/>
    </reaction>
</comment>
<comment type="pathway">
    <text evidence="1">Amino-acid biosynthesis; L-lysine biosynthesis via DAP pathway; DL-2,6-diaminopimelate from LL-2,6-diaminopimelate: step 1/1.</text>
</comment>
<comment type="subunit">
    <text evidence="1">Homodimer.</text>
</comment>
<comment type="subcellular location">
    <subcellularLocation>
        <location evidence="1">Cytoplasm</location>
    </subcellularLocation>
</comment>
<comment type="similarity">
    <text evidence="1">Belongs to the diaminopimelate epimerase family.</text>
</comment>
<evidence type="ECO:0000255" key="1">
    <source>
        <dbReference type="HAMAP-Rule" id="MF_00197"/>
    </source>
</evidence>
<accession>Q15NG5</accession>
<feature type="chain" id="PRO_1000011929" description="Diaminopimelate epimerase">
    <location>
        <begin position="1"/>
        <end position="276"/>
    </location>
</feature>
<feature type="active site" description="Proton donor" evidence="1">
    <location>
        <position position="75"/>
    </location>
</feature>
<feature type="active site" description="Proton acceptor" evidence="1">
    <location>
        <position position="219"/>
    </location>
</feature>
<feature type="binding site" evidence="1">
    <location>
        <position position="13"/>
    </location>
    <ligand>
        <name>substrate</name>
    </ligand>
</feature>
<feature type="binding site" evidence="1">
    <location>
        <position position="46"/>
    </location>
    <ligand>
        <name>substrate</name>
    </ligand>
</feature>
<feature type="binding site" evidence="1">
    <location>
        <position position="66"/>
    </location>
    <ligand>
        <name>substrate</name>
    </ligand>
</feature>
<feature type="binding site" evidence="1">
    <location>
        <begin position="76"/>
        <end position="77"/>
    </location>
    <ligand>
        <name>substrate</name>
    </ligand>
</feature>
<feature type="binding site" evidence="1">
    <location>
        <position position="159"/>
    </location>
    <ligand>
        <name>substrate</name>
    </ligand>
</feature>
<feature type="binding site" evidence="1">
    <location>
        <position position="192"/>
    </location>
    <ligand>
        <name>substrate</name>
    </ligand>
</feature>
<feature type="binding site" evidence="1">
    <location>
        <begin position="210"/>
        <end position="211"/>
    </location>
    <ligand>
        <name>substrate</name>
    </ligand>
</feature>
<feature type="binding site" evidence="1">
    <location>
        <begin position="220"/>
        <end position="221"/>
    </location>
    <ligand>
        <name>substrate</name>
    </ligand>
</feature>
<feature type="site" description="Could be important to modulate the pK values of the two catalytic cysteine residues" evidence="1">
    <location>
        <position position="161"/>
    </location>
</feature>
<feature type="site" description="Could be important to modulate the pK values of the two catalytic cysteine residues" evidence="1">
    <location>
        <position position="210"/>
    </location>
</feature>
<feature type="site" description="Important for dimerization" evidence="1">
    <location>
        <position position="270"/>
    </location>
</feature>
<gene>
    <name evidence="1" type="primary">dapF</name>
    <name type="ordered locus">Patl_4074</name>
</gene>